<sequence length="451" mass="51323">MQDNLPQIWEKTLNLIKPELTEVSFTTWIKSIEVISLEGNTMILGVPNVFTKDILTARYATLISNALKQTTSKNFEIRFIVPSEEKISKTEESQKKLEGSVNISVASDQFVSNNLNPKYTFDTFVIGNSNRFAHAASLAVAESPAKAYNPLFLYGGVGLGKTHLMHAIGHFILQNNPKAKVVYVSSETFTNELINSIRHDRNVEFRNRFRTIDVLLVDDIQFIAGKESTQEEFFHTFNALHESNKQIIISSDRPPKEIPTLEDRLRSRFEWGLITDIQPPDLETRIAILYKKAQMENIDVPNEVLTHIAKKIQSNIRELEGALIRIVAYSSLTNSEITVELASEALKELFSSKARQLNIDLIKEVVANKYNMKIEDFNSKKRTRSISYPRQIAMYLSRELTDLSLPKIGEEFGGRDHTTVMHAHEKISKDILADDNIKEKIERIAKEIKGD</sequence>
<evidence type="ECO:0000255" key="1">
    <source>
        <dbReference type="HAMAP-Rule" id="MF_00377"/>
    </source>
</evidence>
<proteinExistence type="inferred from homology"/>
<accession>A8MEA0</accession>
<organism>
    <name type="scientific">Alkaliphilus oremlandii (strain OhILAs)</name>
    <name type="common">Clostridium oremlandii (strain OhILAs)</name>
    <dbReference type="NCBI Taxonomy" id="350688"/>
    <lineage>
        <taxon>Bacteria</taxon>
        <taxon>Bacillati</taxon>
        <taxon>Bacillota</taxon>
        <taxon>Clostridia</taxon>
        <taxon>Peptostreptococcales</taxon>
        <taxon>Natronincolaceae</taxon>
        <taxon>Alkaliphilus</taxon>
    </lineage>
</organism>
<reference key="1">
    <citation type="submission" date="2007-10" db="EMBL/GenBank/DDBJ databases">
        <title>Complete genome of Alkaliphilus oremlandii OhILAs.</title>
        <authorList>
            <person name="Copeland A."/>
            <person name="Lucas S."/>
            <person name="Lapidus A."/>
            <person name="Barry K."/>
            <person name="Detter J.C."/>
            <person name="Glavina del Rio T."/>
            <person name="Hammon N."/>
            <person name="Israni S."/>
            <person name="Dalin E."/>
            <person name="Tice H."/>
            <person name="Pitluck S."/>
            <person name="Chain P."/>
            <person name="Malfatti S."/>
            <person name="Shin M."/>
            <person name="Vergez L."/>
            <person name="Schmutz J."/>
            <person name="Larimer F."/>
            <person name="Land M."/>
            <person name="Hauser L."/>
            <person name="Kyrpides N."/>
            <person name="Mikhailova N."/>
            <person name="Stolz J.F."/>
            <person name="Dawson A."/>
            <person name="Fisher E."/>
            <person name="Crable B."/>
            <person name="Perera E."/>
            <person name="Lisak J."/>
            <person name="Ranganathan M."/>
            <person name="Basu P."/>
            <person name="Richardson P."/>
        </authorList>
    </citation>
    <scope>NUCLEOTIDE SEQUENCE [LARGE SCALE GENOMIC DNA]</scope>
    <source>
        <strain>OhILAs</strain>
    </source>
</reference>
<name>DNAA_ALKOO</name>
<protein>
    <recommendedName>
        <fullName evidence="1">Chromosomal replication initiator protein DnaA</fullName>
    </recommendedName>
</protein>
<comment type="function">
    <text evidence="1">Plays an essential role in the initiation and regulation of chromosomal replication. ATP-DnaA binds to the origin of replication (oriC) to initiate formation of the DNA replication initiation complex once per cell cycle. Binds the DnaA box (a 9 base pair repeat at the origin) and separates the double-stranded (ds)DNA. Forms a right-handed helical filament on oriC DNA; dsDNA binds to the exterior of the filament while single-stranded (ss)DNA is stabiized in the filament's interior. The ATP-DnaA-oriC complex binds and stabilizes one strand of the AT-rich DNA unwinding element (DUE), permitting loading of DNA polymerase. After initiation quickly degrades to an ADP-DnaA complex that is not apt for DNA replication. Binds acidic phospholipids.</text>
</comment>
<comment type="subunit">
    <text evidence="1">Oligomerizes as a right-handed, spiral filament on DNA at oriC.</text>
</comment>
<comment type="subcellular location">
    <subcellularLocation>
        <location evidence="1">Cytoplasm</location>
    </subcellularLocation>
</comment>
<comment type="domain">
    <text evidence="1">Domain I is involved in oligomerization and binding regulators, domain II is flexibile and of varying length in different bacteria, domain III forms the AAA+ region, while domain IV binds dsDNA.</text>
</comment>
<comment type="similarity">
    <text evidence="1">Belongs to the DnaA family.</text>
</comment>
<feature type="chain" id="PRO_1000060007" description="Chromosomal replication initiator protein DnaA">
    <location>
        <begin position="1"/>
        <end position="451"/>
    </location>
</feature>
<feature type="region of interest" description="Domain I, interacts with DnaA modulators" evidence="1">
    <location>
        <begin position="1"/>
        <end position="73"/>
    </location>
</feature>
<feature type="region of interest" description="Domain II" evidence="1">
    <location>
        <begin position="73"/>
        <end position="113"/>
    </location>
</feature>
<feature type="region of interest" description="Domain III, AAA+ region" evidence="1">
    <location>
        <begin position="114"/>
        <end position="330"/>
    </location>
</feature>
<feature type="region of interest" description="Domain IV, binds dsDNA" evidence="1">
    <location>
        <begin position="331"/>
        <end position="451"/>
    </location>
</feature>
<feature type="binding site" evidence="1">
    <location>
        <position position="158"/>
    </location>
    <ligand>
        <name>ATP</name>
        <dbReference type="ChEBI" id="CHEBI:30616"/>
    </ligand>
</feature>
<feature type="binding site" evidence="1">
    <location>
        <position position="160"/>
    </location>
    <ligand>
        <name>ATP</name>
        <dbReference type="ChEBI" id="CHEBI:30616"/>
    </ligand>
</feature>
<feature type="binding site" evidence="1">
    <location>
        <position position="161"/>
    </location>
    <ligand>
        <name>ATP</name>
        <dbReference type="ChEBI" id="CHEBI:30616"/>
    </ligand>
</feature>
<feature type="binding site" evidence="1">
    <location>
        <position position="162"/>
    </location>
    <ligand>
        <name>ATP</name>
        <dbReference type="ChEBI" id="CHEBI:30616"/>
    </ligand>
</feature>
<gene>
    <name evidence="1" type="primary">dnaA</name>
    <name type="ordered locus">Clos_0001</name>
</gene>
<dbReference type="EMBL" id="CP000853">
    <property type="protein sequence ID" value="ABW17571.1"/>
    <property type="molecule type" value="Genomic_DNA"/>
</dbReference>
<dbReference type="RefSeq" id="WP_012157886.1">
    <property type="nucleotide sequence ID" value="NC_009922.1"/>
</dbReference>
<dbReference type="SMR" id="A8MEA0"/>
<dbReference type="STRING" id="350688.Clos_0001"/>
<dbReference type="KEGG" id="aoe:Clos_0001"/>
<dbReference type="eggNOG" id="COG0593">
    <property type="taxonomic scope" value="Bacteria"/>
</dbReference>
<dbReference type="HOGENOM" id="CLU_026910_3_1_9"/>
<dbReference type="OrthoDB" id="9807019at2"/>
<dbReference type="Proteomes" id="UP000000269">
    <property type="component" value="Chromosome"/>
</dbReference>
<dbReference type="GO" id="GO:0005737">
    <property type="term" value="C:cytoplasm"/>
    <property type="evidence" value="ECO:0007669"/>
    <property type="project" value="UniProtKB-SubCell"/>
</dbReference>
<dbReference type="GO" id="GO:0005886">
    <property type="term" value="C:plasma membrane"/>
    <property type="evidence" value="ECO:0007669"/>
    <property type="project" value="TreeGrafter"/>
</dbReference>
<dbReference type="GO" id="GO:0005524">
    <property type="term" value="F:ATP binding"/>
    <property type="evidence" value="ECO:0007669"/>
    <property type="project" value="UniProtKB-UniRule"/>
</dbReference>
<dbReference type="GO" id="GO:0016887">
    <property type="term" value="F:ATP hydrolysis activity"/>
    <property type="evidence" value="ECO:0007669"/>
    <property type="project" value="InterPro"/>
</dbReference>
<dbReference type="GO" id="GO:0003688">
    <property type="term" value="F:DNA replication origin binding"/>
    <property type="evidence" value="ECO:0007669"/>
    <property type="project" value="UniProtKB-UniRule"/>
</dbReference>
<dbReference type="GO" id="GO:0008289">
    <property type="term" value="F:lipid binding"/>
    <property type="evidence" value="ECO:0007669"/>
    <property type="project" value="UniProtKB-KW"/>
</dbReference>
<dbReference type="GO" id="GO:0006270">
    <property type="term" value="P:DNA replication initiation"/>
    <property type="evidence" value="ECO:0007669"/>
    <property type="project" value="UniProtKB-UniRule"/>
</dbReference>
<dbReference type="GO" id="GO:0006275">
    <property type="term" value="P:regulation of DNA replication"/>
    <property type="evidence" value="ECO:0007669"/>
    <property type="project" value="UniProtKB-UniRule"/>
</dbReference>
<dbReference type="CDD" id="cd00009">
    <property type="entry name" value="AAA"/>
    <property type="match status" value="1"/>
</dbReference>
<dbReference type="CDD" id="cd06571">
    <property type="entry name" value="Bac_DnaA_C"/>
    <property type="match status" value="1"/>
</dbReference>
<dbReference type="FunFam" id="1.10.1750.10:FF:000003">
    <property type="entry name" value="Chromosomal replication initiator protein DnaA"/>
    <property type="match status" value="1"/>
</dbReference>
<dbReference type="FunFam" id="1.10.8.60:FF:000003">
    <property type="entry name" value="Chromosomal replication initiator protein DnaA"/>
    <property type="match status" value="1"/>
</dbReference>
<dbReference type="FunFam" id="3.40.50.300:FF:000150">
    <property type="entry name" value="Chromosomal replication initiator protein DnaA"/>
    <property type="match status" value="1"/>
</dbReference>
<dbReference type="Gene3D" id="1.10.1750.10">
    <property type="match status" value="1"/>
</dbReference>
<dbReference type="Gene3D" id="1.10.8.60">
    <property type="match status" value="1"/>
</dbReference>
<dbReference type="Gene3D" id="3.30.300.180">
    <property type="match status" value="1"/>
</dbReference>
<dbReference type="Gene3D" id="3.40.50.300">
    <property type="entry name" value="P-loop containing nucleotide triphosphate hydrolases"/>
    <property type="match status" value="1"/>
</dbReference>
<dbReference type="HAMAP" id="MF_00377">
    <property type="entry name" value="DnaA_bact"/>
    <property type="match status" value="1"/>
</dbReference>
<dbReference type="InterPro" id="IPR003593">
    <property type="entry name" value="AAA+_ATPase"/>
</dbReference>
<dbReference type="InterPro" id="IPR001957">
    <property type="entry name" value="Chromosome_initiator_DnaA"/>
</dbReference>
<dbReference type="InterPro" id="IPR020591">
    <property type="entry name" value="Chromosome_initiator_DnaA-like"/>
</dbReference>
<dbReference type="InterPro" id="IPR018312">
    <property type="entry name" value="Chromosome_initiator_DnaA_CS"/>
</dbReference>
<dbReference type="InterPro" id="IPR013159">
    <property type="entry name" value="DnaA_C"/>
</dbReference>
<dbReference type="InterPro" id="IPR013317">
    <property type="entry name" value="DnaA_dom"/>
</dbReference>
<dbReference type="InterPro" id="IPR024633">
    <property type="entry name" value="DnaA_N_dom"/>
</dbReference>
<dbReference type="InterPro" id="IPR038454">
    <property type="entry name" value="DnaA_N_sf"/>
</dbReference>
<dbReference type="InterPro" id="IPR027417">
    <property type="entry name" value="P-loop_NTPase"/>
</dbReference>
<dbReference type="InterPro" id="IPR010921">
    <property type="entry name" value="Trp_repressor/repl_initiator"/>
</dbReference>
<dbReference type="NCBIfam" id="TIGR00362">
    <property type="entry name" value="DnaA"/>
    <property type="match status" value="1"/>
</dbReference>
<dbReference type="NCBIfam" id="NF010686">
    <property type="entry name" value="PRK14086.1"/>
    <property type="match status" value="1"/>
</dbReference>
<dbReference type="PANTHER" id="PTHR30050">
    <property type="entry name" value="CHROMOSOMAL REPLICATION INITIATOR PROTEIN DNAA"/>
    <property type="match status" value="1"/>
</dbReference>
<dbReference type="PANTHER" id="PTHR30050:SF2">
    <property type="entry name" value="CHROMOSOMAL REPLICATION INITIATOR PROTEIN DNAA"/>
    <property type="match status" value="1"/>
</dbReference>
<dbReference type="Pfam" id="PF00308">
    <property type="entry name" value="Bac_DnaA"/>
    <property type="match status" value="1"/>
</dbReference>
<dbReference type="Pfam" id="PF08299">
    <property type="entry name" value="Bac_DnaA_C"/>
    <property type="match status" value="1"/>
</dbReference>
<dbReference type="Pfam" id="PF11638">
    <property type="entry name" value="DnaA_N"/>
    <property type="match status" value="1"/>
</dbReference>
<dbReference type="PRINTS" id="PR00051">
    <property type="entry name" value="DNAA"/>
</dbReference>
<dbReference type="SMART" id="SM00382">
    <property type="entry name" value="AAA"/>
    <property type="match status" value="1"/>
</dbReference>
<dbReference type="SMART" id="SM00760">
    <property type="entry name" value="Bac_DnaA_C"/>
    <property type="match status" value="1"/>
</dbReference>
<dbReference type="SUPFAM" id="SSF52540">
    <property type="entry name" value="P-loop containing nucleoside triphosphate hydrolases"/>
    <property type="match status" value="1"/>
</dbReference>
<dbReference type="SUPFAM" id="SSF48295">
    <property type="entry name" value="TrpR-like"/>
    <property type="match status" value="1"/>
</dbReference>
<dbReference type="PROSITE" id="PS01008">
    <property type="entry name" value="DNAA"/>
    <property type="match status" value="1"/>
</dbReference>
<keyword id="KW-0067">ATP-binding</keyword>
<keyword id="KW-0963">Cytoplasm</keyword>
<keyword id="KW-0235">DNA replication</keyword>
<keyword id="KW-0238">DNA-binding</keyword>
<keyword id="KW-0446">Lipid-binding</keyword>
<keyword id="KW-0547">Nucleotide-binding</keyword>
<keyword id="KW-1185">Reference proteome</keyword>